<accession>Q9WDG4</accession>
<name>CAPSD_PMMV1</name>
<feature type="initiator methionine" description="Removed; by host" evidence="1">
    <location>
        <position position="1"/>
    </location>
</feature>
<feature type="chain" id="PRO_0000144939" description="Capsid protein">
    <location>
        <begin position="2"/>
        <end position="159"/>
    </location>
</feature>
<feature type="modified residue" description="N-acetylserine; by host" evidence="1">
    <location>
        <position position="2"/>
    </location>
</feature>
<comment type="function">
    <text>Capsid protein self-assembles to form rod-shaped virions about 18 nm in diameter with a central canal enclosing the viral genomic RNA.</text>
</comment>
<comment type="subcellular location">
    <subcellularLocation>
        <location evidence="2">Virion</location>
    </subcellularLocation>
</comment>
<comment type="similarity">
    <text evidence="2">Belongs to the virgaviridae capsid protein family.</text>
</comment>
<sequence length="159" mass="17791">MSYSITSPSQFVFLSSVWADPIELLNFGTNSLGNQFQTQQARTTVQQQFSEVWKPFPQSTVRFPGDVYKVYRYNAVLDPLITALLGSFDTRNRIIEVENQQNPTTAETLDATRRVDDATVAIRSAINNLVNELVRGTGLYNQNTFESMSGLVWTSAPAS</sequence>
<gene>
    <name type="primary">CP</name>
</gene>
<reference key="1">
    <citation type="submission" date="1998-11" db="EMBL/GenBank/DDBJ databases">
        <title>The coat protein gene of pepper mild mottle virus isolated from hot pepper in Korea.</title>
        <authorList>
            <person name="Sohn S.-H."/>
            <person name="Hahn J.-H."/>
            <person name="Hwang Y.-S."/>
        </authorList>
    </citation>
    <scope>NUCLEOTIDE SEQUENCE [MRNA]</scope>
</reference>
<organismHost>
    <name type="scientific">Capsicum</name>
    <name type="common">peppers</name>
    <dbReference type="NCBI Taxonomy" id="4071"/>
</organismHost>
<protein>
    <recommendedName>
        <fullName>Capsid protein</fullName>
    </recommendedName>
    <alternativeName>
        <fullName>Coat protein</fullName>
    </alternativeName>
</protein>
<keyword id="KW-0007">Acetylation</keyword>
<keyword id="KW-0167">Capsid protein</keyword>
<keyword id="KW-1139">Helical capsid protein</keyword>
<keyword id="KW-0946">Virion</keyword>
<evidence type="ECO:0000250" key="1"/>
<evidence type="ECO:0000305" key="2"/>
<dbReference type="EMBL" id="AF103777">
    <property type="protein sequence ID" value="AAD20288.1"/>
    <property type="molecule type" value="mRNA"/>
</dbReference>
<dbReference type="SMR" id="Q9WDG4"/>
<dbReference type="GO" id="GO:0019029">
    <property type="term" value="C:helical viral capsid"/>
    <property type="evidence" value="ECO:0007669"/>
    <property type="project" value="UniProtKB-KW"/>
</dbReference>
<dbReference type="GO" id="GO:0005198">
    <property type="term" value="F:structural molecule activity"/>
    <property type="evidence" value="ECO:0007669"/>
    <property type="project" value="InterPro"/>
</dbReference>
<dbReference type="Gene3D" id="1.20.120.70">
    <property type="entry name" value="Tobacco mosaic virus-like, coat protein"/>
    <property type="match status" value="1"/>
</dbReference>
<dbReference type="InterPro" id="IPR001337">
    <property type="entry name" value="TMV-like_coat"/>
</dbReference>
<dbReference type="InterPro" id="IPR036417">
    <property type="entry name" value="TMV-like_coat_sf"/>
</dbReference>
<dbReference type="Pfam" id="PF00721">
    <property type="entry name" value="TMV_coat"/>
    <property type="match status" value="1"/>
</dbReference>
<dbReference type="SUPFAM" id="SSF47195">
    <property type="entry name" value="TMV-like viral coat proteins"/>
    <property type="match status" value="1"/>
</dbReference>
<proteinExistence type="evidence at transcript level"/>
<organism>
    <name type="scientific">Pepper mild mottle virus (strain P1)</name>
    <name type="common">PMMV</name>
    <dbReference type="NCBI Taxonomy" id="138304"/>
    <lineage>
        <taxon>Viruses</taxon>
        <taxon>Riboviria</taxon>
        <taxon>Orthornavirae</taxon>
        <taxon>Kitrinoviricota</taxon>
        <taxon>Alsuviricetes</taxon>
        <taxon>Martellivirales</taxon>
        <taxon>Virgaviridae</taxon>
        <taxon>Tobamovirus</taxon>
        <taxon>Pepper mild mottle virus</taxon>
    </lineage>
</organism>